<protein>
    <recommendedName>
        <fullName evidence="4">Acetone carboxylase gamma subunit</fullName>
        <ecNumber>6.4.1.6</ecNumber>
    </recommendedName>
</protein>
<organism>
    <name type="scientific">Xanthobacter autotrophicus (strain ATCC BAA-1158 / Py2)</name>
    <dbReference type="NCBI Taxonomy" id="78245"/>
    <lineage>
        <taxon>Bacteria</taxon>
        <taxon>Pseudomonadati</taxon>
        <taxon>Pseudomonadota</taxon>
        <taxon>Alphaproteobacteria</taxon>
        <taxon>Hyphomicrobiales</taxon>
        <taxon>Xanthobacteraceae</taxon>
        <taxon>Xanthobacter</taxon>
    </lineage>
</organism>
<comment type="function">
    <text evidence="2">Catalyzes the carboxylation of acetone to form acetoacetate. Has a reduced activity on butanone, and no activity on 2-pentatone, 3-pentatone, 2-hexanone, chloroacetone, pyruvate, phosphoenolpyruvate, acetaldehyde, propionaldehyde and propylene oxide.</text>
</comment>
<comment type="catalytic activity">
    <reaction evidence="2">
        <text>acetone + hydrogencarbonate + 2 ATP + 3 H2O = acetoacetate + 2 AMP + 4 phosphate + 4 H(+)</text>
        <dbReference type="Rhea" id="RHEA:18385"/>
        <dbReference type="ChEBI" id="CHEBI:13705"/>
        <dbReference type="ChEBI" id="CHEBI:15347"/>
        <dbReference type="ChEBI" id="CHEBI:15377"/>
        <dbReference type="ChEBI" id="CHEBI:15378"/>
        <dbReference type="ChEBI" id="CHEBI:17544"/>
        <dbReference type="ChEBI" id="CHEBI:30616"/>
        <dbReference type="ChEBI" id="CHEBI:43474"/>
        <dbReference type="ChEBI" id="CHEBI:456215"/>
        <dbReference type="EC" id="6.4.1.6"/>
    </reaction>
</comment>
<comment type="cofactor">
    <cofactor evidence="2">
        <name>Fe cation</name>
        <dbReference type="ChEBI" id="CHEBI:24875"/>
    </cofactor>
</comment>
<comment type="cofactor">
    <cofactor evidence="2">
        <name>Mg(2+)</name>
        <dbReference type="ChEBI" id="CHEBI:18420"/>
    </cofactor>
</comment>
<comment type="cofactor">
    <cofactor evidence="2">
        <name>Zn(2+)</name>
        <dbReference type="ChEBI" id="CHEBI:29105"/>
    </cofactor>
    <text evidence="2">Zn(2+). The heterohexamer contains tightly bound iron, manganese and zinc ions.</text>
</comment>
<comment type="biophysicochemical properties">
    <kinetics>
        <KM evidence="2">7.8 uM for acetone (in the presence of CO(2))</KM>
        <KM evidence="2">7.68 uM for acetone (in the absence of CO(2))</KM>
        <KM evidence="2">0.122 mM for ATP</KM>
        <KM evidence="2">4.17 mM for CO(2)</KM>
        <Vmax evidence="2">0.485 umol/min/mg enzyme toward acetone (in the presence of CO(2))</Vmax>
        <Vmax evidence="2">0.616 umol/min/mg enzyme toward acetone (in the absence of CO(2))</Vmax>
        <Vmax evidence="2">0.463 umol/min/mg enzyme toward ATP</Vmax>
        <Vmax evidence="2">0.225 umol/min/mg enzyme toward CO(2)</Vmax>
    </kinetics>
    <phDependence>
        <text evidence="2">Optimum pH is 7.6.</text>
    </phDependence>
</comment>
<comment type="subunit">
    <text evidence="2">Heterohexamer of two alpha, two beta and two gamma subunits.</text>
</comment>
<comment type="mass spectrometry"/>
<proteinExistence type="evidence at protein level"/>
<sequence>MAYTRSKIVDLVDGKIDPDTLHQMLSTPKDPERFVTYVEILQERMPWDDKIILPLGPKLFIVQQKVSKKWTVRCECGHDFCDWKDNWKLSARVHVRDTPQKMEEIYPRLMAPTPSWQVIREYFCPECGTLHDVEAPTPWYPVIHDFSPDIEGFYQEWLGLPVPERADA</sequence>
<evidence type="ECO:0000269" key="1">
    <source>
    </source>
</evidence>
<evidence type="ECO:0000269" key="2">
    <source>
    </source>
</evidence>
<evidence type="ECO:0000305" key="3"/>
<evidence type="ECO:0000312" key="4">
    <source>
        <dbReference type="EMBL" id="AAL17712.1"/>
    </source>
</evidence>
<evidence type="ECO:0000312" key="5">
    <source>
        <dbReference type="EMBL" id="ABS68740.1"/>
    </source>
</evidence>
<evidence type="ECO:0007829" key="6">
    <source>
        <dbReference type="PDB" id="5M45"/>
    </source>
</evidence>
<evidence type="ECO:0007829" key="7">
    <source>
        <dbReference type="PDB" id="5SVB"/>
    </source>
</evidence>
<name>ACXC_XANP2</name>
<reference evidence="3 4" key="1">
    <citation type="journal article" date="2002" name="J. Bacteriol.">
        <title>Biochemical, molecular, and genetic analyses of the acetone carboxylases from Xanthobacter autotrophicus strain Py2 and Rhodobacter capsulatus strain B10.</title>
        <authorList>
            <person name="Sluis M.K."/>
            <person name="Larsen R.A."/>
            <person name="Krum J.G."/>
            <person name="Anderson R."/>
            <person name="Metcalf W.W."/>
            <person name="Ensign S.A."/>
        </authorList>
    </citation>
    <scope>NUCLEOTIDE SEQUENCE [GENOMIC DNA]</scope>
    <scope>PROTEIN SEQUENCE OF 2-14</scope>
    <scope>IDENTIFICATION</scope>
</reference>
<reference evidence="5" key="2">
    <citation type="submission" date="2007-07" db="EMBL/GenBank/DDBJ databases">
        <title>Complete sequence of chromosome of Xanthobacter autotrophicus Py2.</title>
        <authorList>
            <consortium name="US DOE Joint Genome Institute"/>
            <person name="Copeland A."/>
            <person name="Lucas S."/>
            <person name="Lapidus A."/>
            <person name="Barry K."/>
            <person name="Glavina del Rio T."/>
            <person name="Hammon N."/>
            <person name="Israni S."/>
            <person name="Dalin E."/>
            <person name="Tice H."/>
            <person name="Pitluck S."/>
            <person name="Sims D."/>
            <person name="Brettin T."/>
            <person name="Bruce D."/>
            <person name="Detter J.C."/>
            <person name="Han C."/>
            <person name="Tapia R."/>
            <person name="Brainard J."/>
            <person name="Schmutz J."/>
            <person name="Larimer F."/>
            <person name="Land M."/>
            <person name="Hauser L."/>
            <person name="Kyrpides N."/>
            <person name="Kim E."/>
            <person name="Ensigns S.A."/>
            <person name="Richardson P."/>
        </authorList>
    </citation>
    <scope>NUCLEOTIDE SEQUENCE [LARGE SCALE GENOMIC DNA]</scope>
    <source>
        <strain>ATCC BAA-1158 / Py2</strain>
    </source>
</reference>
<reference evidence="3" key="3">
    <citation type="journal article" date="1997" name="Proc. Natl. Acad. Sci. U.S.A.">
        <title>Purification and characterization of acetone carboxylase from Xanthobacter strain Py2.</title>
        <authorList>
            <person name="Sluis M.K."/>
            <person name="Ensign S.A."/>
        </authorList>
    </citation>
    <scope>FUNCTION</scope>
    <scope>CATALYTIC ACTIVITY</scope>
    <scope>COFACTOR</scope>
    <scope>BIOPHYSICOCHEMICAL PROPERTIES</scope>
    <scope>SUBUNIT</scope>
    <scope>MASS SPECTROMETRY</scope>
</reference>
<dbReference type="EC" id="6.4.1.6"/>
<dbReference type="EMBL" id="AY055852">
    <property type="protein sequence ID" value="AAL17712.1"/>
    <property type="molecule type" value="Genomic_DNA"/>
</dbReference>
<dbReference type="EMBL" id="CP000781">
    <property type="protein sequence ID" value="ABS68740.1"/>
    <property type="molecule type" value="Genomic_DNA"/>
</dbReference>
<dbReference type="PDB" id="5M45">
    <property type="method" value="X-ray"/>
    <property type="resolution" value="1.87 A"/>
    <property type="chains" value="C/F/I/L=1-168"/>
</dbReference>
<dbReference type="PDB" id="5SVB">
    <property type="method" value="X-ray"/>
    <property type="resolution" value="2.65 A"/>
    <property type="chains" value="C/F=1-168"/>
</dbReference>
<dbReference type="PDB" id="5SVC">
    <property type="method" value="X-ray"/>
    <property type="resolution" value="2.70 A"/>
    <property type="chains" value="C/F=1-168"/>
</dbReference>
<dbReference type="PDBsum" id="5M45"/>
<dbReference type="PDBsum" id="5SVB"/>
<dbReference type="PDBsum" id="5SVC"/>
<dbReference type="SMR" id="Q8RM02"/>
<dbReference type="STRING" id="78245.Xaut_3511"/>
<dbReference type="KEGG" id="xau:Xaut_3511"/>
<dbReference type="eggNOG" id="COG4647">
    <property type="taxonomic scope" value="Bacteria"/>
</dbReference>
<dbReference type="HOGENOM" id="CLU_1641736_0_0_5"/>
<dbReference type="OrthoDB" id="8688459at2"/>
<dbReference type="PhylomeDB" id="Q8RM02"/>
<dbReference type="BioCyc" id="MetaCyc:MONOMER-13283"/>
<dbReference type="Proteomes" id="UP000002417">
    <property type="component" value="Chromosome"/>
</dbReference>
<dbReference type="GO" id="GO:0018710">
    <property type="term" value="F:acetone carboxylase activity"/>
    <property type="evidence" value="ECO:0000314"/>
    <property type="project" value="UniProtKB"/>
</dbReference>
<dbReference type="GO" id="GO:0005524">
    <property type="term" value="F:ATP binding"/>
    <property type="evidence" value="ECO:0007669"/>
    <property type="project" value="UniProtKB-KW"/>
</dbReference>
<dbReference type="GO" id="GO:0140977">
    <property type="term" value="P:cellular detoxification of acetone"/>
    <property type="evidence" value="ECO:0000314"/>
    <property type="project" value="UniProtKB"/>
</dbReference>
<dbReference type="InterPro" id="IPR016750">
    <property type="entry name" value="Aceto_COase_bsu/gsu"/>
</dbReference>
<dbReference type="Pfam" id="PF08882">
    <property type="entry name" value="Acetone_carb_G"/>
    <property type="match status" value="1"/>
</dbReference>
<dbReference type="PIRSF" id="PIRSF019217">
    <property type="entry name" value="Acetone_carboxlyase_gsu"/>
    <property type="match status" value="1"/>
</dbReference>
<gene>
    <name evidence="4" type="primary">acxC</name>
    <name type="ordered locus">Xaut_3511</name>
</gene>
<accession>Q8RM02</accession>
<feature type="initiator methionine" description="Removed" evidence="1">
    <location>
        <position position="1"/>
    </location>
</feature>
<feature type="chain" id="PRO_0000403053" description="Acetone carboxylase gamma subunit" evidence="1">
    <location>
        <begin position="2"/>
        <end position="168"/>
    </location>
</feature>
<feature type="sequence conflict" description="In Ref. 1; AA sequence." evidence="3" ref="1">
    <original>S</original>
    <variation>A</variation>
    <location>
        <position position="6"/>
    </location>
</feature>
<feature type="helix" evidence="6">
    <location>
        <begin position="5"/>
        <end position="12"/>
    </location>
</feature>
<feature type="helix" evidence="6">
    <location>
        <begin position="18"/>
        <end position="26"/>
    </location>
</feature>
<feature type="helix" evidence="6">
    <location>
        <begin position="33"/>
        <end position="44"/>
    </location>
</feature>
<feature type="strand" evidence="7">
    <location>
        <begin position="45"/>
        <end position="47"/>
    </location>
</feature>
<feature type="strand" evidence="6">
    <location>
        <begin position="49"/>
        <end position="56"/>
    </location>
</feature>
<feature type="strand" evidence="6">
    <location>
        <begin position="59"/>
        <end position="63"/>
    </location>
</feature>
<feature type="turn" evidence="6">
    <location>
        <begin position="65"/>
        <end position="67"/>
    </location>
</feature>
<feature type="strand" evidence="6">
    <location>
        <begin position="70"/>
        <end position="74"/>
    </location>
</feature>
<feature type="strand" evidence="6">
    <location>
        <begin position="79"/>
        <end position="82"/>
    </location>
</feature>
<feature type="helix" evidence="6">
    <location>
        <begin position="87"/>
        <end position="90"/>
    </location>
</feature>
<feature type="strand" evidence="6">
    <location>
        <begin position="91"/>
        <end position="96"/>
    </location>
</feature>
<feature type="helix" evidence="6">
    <location>
        <begin position="99"/>
        <end position="103"/>
    </location>
</feature>
<feature type="turn" evidence="6">
    <location>
        <begin position="108"/>
        <end position="110"/>
    </location>
</feature>
<feature type="turn" evidence="6">
    <location>
        <begin position="114"/>
        <end position="116"/>
    </location>
</feature>
<feature type="strand" evidence="6">
    <location>
        <begin position="119"/>
        <end position="123"/>
    </location>
</feature>
<feature type="turn" evidence="6">
    <location>
        <begin position="125"/>
        <end position="127"/>
    </location>
</feature>
<feature type="strand" evidence="6">
    <location>
        <begin position="130"/>
        <end position="134"/>
    </location>
</feature>
<feature type="strand" evidence="6">
    <location>
        <begin position="146"/>
        <end position="148"/>
    </location>
</feature>
<feature type="helix" evidence="6">
    <location>
        <begin position="150"/>
        <end position="156"/>
    </location>
</feature>
<keyword id="KW-0002">3D-structure</keyword>
<keyword id="KW-0067">ATP-binding</keyword>
<keyword id="KW-0903">Direct protein sequencing</keyword>
<keyword id="KW-0436">Ligase</keyword>
<keyword id="KW-0547">Nucleotide-binding</keyword>
<keyword id="KW-1185">Reference proteome</keyword>